<name>MATK_ULMPA</name>
<reference key="1">
    <citation type="journal article" date="2001" name="Plant Syst. Evol.">
        <title>Further evidence on paraphyly of the Celtidaceae from the chloroplast gene matK.</title>
        <authorList>
            <person name="Song B.-H."/>
            <person name="Wang X.-Q."/>
            <person name="Li F.-Z."/>
            <person name="Hong D.-Y."/>
        </authorList>
    </citation>
    <scope>NUCLEOTIDE SEQUENCE [GENOMIC DNA]</scope>
</reference>
<gene>
    <name evidence="1" type="primary">matK</name>
</gene>
<dbReference type="EMBL" id="AF345321">
    <property type="protein sequence ID" value="AAL15627.1"/>
    <property type="molecule type" value="Genomic_DNA"/>
</dbReference>
<dbReference type="RefSeq" id="YP_009906727.1">
    <property type="nucleotide sequence ID" value="NC_049883.1"/>
</dbReference>
<dbReference type="GeneID" id="56139907"/>
<dbReference type="GO" id="GO:0009507">
    <property type="term" value="C:chloroplast"/>
    <property type="evidence" value="ECO:0007669"/>
    <property type="project" value="UniProtKB-SubCell"/>
</dbReference>
<dbReference type="GO" id="GO:0003723">
    <property type="term" value="F:RNA binding"/>
    <property type="evidence" value="ECO:0007669"/>
    <property type="project" value="UniProtKB-KW"/>
</dbReference>
<dbReference type="GO" id="GO:0006397">
    <property type="term" value="P:mRNA processing"/>
    <property type="evidence" value="ECO:0007669"/>
    <property type="project" value="UniProtKB-KW"/>
</dbReference>
<dbReference type="GO" id="GO:0008380">
    <property type="term" value="P:RNA splicing"/>
    <property type="evidence" value="ECO:0007669"/>
    <property type="project" value="UniProtKB-UniRule"/>
</dbReference>
<dbReference type="GO" id="GO:0008033">
    <property type="term" value="P:tRNA processing"/>
    <property type="evidence" value="ECO:0007669"/>
    <property type="project" value="UniProtKB-KW"/>
</dbReference>
<dbReference type="HAMAP" id="MF_01390">
    <property type="entry name" value="MatK"/>
    <property type="match status" value="1"/>
</dbReference>
<dbReference type="InterPro" id="IPR024937">
    <property type="entry name" value="Domain_X"/>
</dbReference>
<dbReference type="InterPro" id="IPR002866">
    <property type="entry name" value="Maturase_MatK"/>
</dbReference>
<dbReference type="InterPro" id="IPR024942">
    <property type="entry name" value="Maturase_MatK_N"/>
</dbReference>
<dbReference type="PANTHER" id="PTHR34811">
    <property type="entry name" value="MATURASE K"/>
    <property type="match status" value="1"/>
</dbReference>
<dbReference type="PANTHER" id="PTHR34811:SF1">
    <property type="entry name" value="MATURASE K"/>
    <property type="match status" value="1"/>
</dbReference>
<dbReference type="Pfam" id="PF01348">
    <property type="entry name" value="Intron_maturas2"/>
    <property type="match status" value="1"/>
</dbReference>
<dbReference type="Pfam" id="PF01824">
    <property type="entry name" value="MatK_N"/>
    <property type="match status" value="1"/>
</dbReference>
<protein>
    <recommendedName>
        <fullName evidence="1">Maturase K</fullName>
    </recommendedName>
    <alternativeName>
        <fullName evidence="1">Intron maturase</fullName>
    </alternativeName>
</protein>
<geneLocation type="chloroplast"/>
<sequence>MAKFQGYLELDRFWKHDFLYPLIFREYIYAFAHDRGLNKSSLLENVGYDNKSSLLIVKRLITRMYQQNHLILVAHDSNQNNVFWSNKNLYSQLISEGFAVIVEIPFSIRLVSSLKGTEIVKYSNLRSIHSIFPFLEDKFPYLNSVSDVLIPYPIHLEILVQILRYWVKDASSLHLLRLFLHDYYNWNSLIISNKSISIFFKSNSRFFLFLYNSHVCEYESILLFIRNQSCHLRLTSSGSFFERIYFYEKIKHPIEEVFSNDFPAIPLFFQDPFMHYVRYQGKSILVSKDTPLLMNKWKYYLVHLWQCHFYVWSEPGRIHINQLSKHSLFFLGYLSSMRLNLSVVRSQMLENSFLMDNAMKKIDTLVPISPLIGSLAKMKFCNALGHPISKSTWADSSDLDIIDRFVRIWRNLFHYYSGSSKKKSLYRIKYILRVSCVKTLARKHKSTVRAFLKRLGSELLEEFFMEEEEVLSFIFPRTYYTLRRLYRGRIWYLDIFCINDFVNHE</sequence>
<feature type="chain" id="PRO_0000143774" description="Maturase K">
    <location>
        <begin position="1"/>
        <end position="505"/>
    </location>
</feature>
<keyword id="KW-0150">Chloroplast</keyword>
<keyword id="KW-0507">mRNA processing</keyword>
<keyword id="KW-0934">Plastid</keyword>
<keyword id="KW-0694">RNA-binding</keyword>
<keyword id="KW-0819">tRNA processing</keyword>
<organism>
    <name type="scientific">Ulmus parvifolia</name>
    <name type="common">Chinese elm</name>
    <name type="synonym">Ulmus sieboldii</name>
    <dbReference type="NCBI Taxonomy" id="63058"/>
    <lineage>
        <taxon>Eukaryota</taxon>
        <taxon>Viridiplantae</taxon>
        <taxon>Streptophyta</taxon>
        <taxon>Embryophyta</taxon>
        <taxon>Tracheophyta</taxon>
        <taxon>Spermatophyta</taxon>
        <taxon>Magnoliopsida</taxon>
        <taxon>eudicotyledons</taxon>
        <taxon>Gunneridae</taxon>
        <taxon>Pentapetalae</taxon>
        <taxon>rosids</taxon>
        <taxon>fabids</taxon>
        <taxon>Rosales</taxon>
        <taxon>Ulmaceae</taxon>
        <taxon>Ulmus</taxon>
    </lineage>
</organism>
<evidence type="ECO:0000255" key="1">
    <source>
        <dbReference type="HAMAP-Rule" id="MF_01390"/>
    </source>
</evidence>
<comment type="function">
    <text evidence="1">Usually encoded in the trnK tRNA gene intron. Probably assists in splicing its own and other chloroplast group II introns.</text>
</comment>
<comment type="subcellular location">
    <subcellularLocation>
        <location>Plastid</location>
        <location>Chloroplast</location>
    </subcellularLocation>
</comment>
<comment type="similarity">
    <text evidence="1">Belongs to the intron maturase 2 family. MatK subfamily.</text>
</comment>
<proteinExistence type="inferred from homology"/>
<accession>Q95BX6</accession>